<name>RL1_MYCMM</name>
<reference key="1">
    <citation type="journal article" date="2008" name="Genome Res.">
        <title>Insights from the complete genome sequence of Mycobacterium marinum on the evolution of Mycobacterium tuberculosis.</title>
        <authorList>
            <person name="Stinear T.P."/>
            <person name="Seemann T."/>
            <person name="Harrison P.F."/>
            <person name="Jenkin G.A."/>
            <person name="Davies J.K."/>
            <person name="Johnson P.D."/>
            <person name="Abdellah Z."/>
            <person name="Arrowsmith C."/>
            <person name="Chillingworth T."/>
            <person name="Churcher C."/>
            <person name="Clarke K."/>
            <person name="Cronin A."/>
            <person name="Davis P."/>
            <person name="Goodhead I."/>
            <person name="Holroyd N."/>
            <person name="Jagels K."/>
            <person name="Lord A."/>
            <person name="Moule S."/>
            <person name="Mungall K."/>
            <person name="Norbertczak H."/>
            <person name="Quail M.A."/>
            <person name="Rabbinowitsch E."/>
            <person name="Walker D."/>
            <person name="White B."/>
            <person name="Whitehead S."/>
            <person name="Small P.L."/>
            <person name="Brosch R."/>
            <person name="Ramakrishnan L."/>
            <person name="Fischbach M.A."/>
            <person name="Parkhill J."/>
            <person name="Cole S.T."/>
        </authorList>
    </citation>
    <scope>NUCLEOTIDE SEQUENCE [LARGE SCALE GENOMIC DNA]</scope>
    <source>
        <strain>ATCC BAA-535 / M</strain>
    </source>
</reference>
<dbReference type="EMBL" id="CP000854">
    <property type="protein sequence ID" value="ACC39430.1"/>
    <property type="molecule type" value="Genomic_DNA"/>
</dbReference>
<dbReference type="RefSeq" id="WP_012392888.1">
    <property type="nucleotide sequence ID" value="NC_010612.1"/>
</dbReference>
<dbReference type="SMR" id="B2HSH2"/>
<dbReference type="STRING" id="216594.MMAR_0974"/>
<dbReference type="GeneID" id="93438662"/>
<dbReference type="KEGG" id="mmi:MMAR_0974"/>
<dbReference type="eggNOG" id="COG0081">
    <property type="taxonomic scope" value="Bacteria"/>
</dbReference>
<dbReference type="HOGENOM" id="CLU_062853_0_0_11"/>
<dbReference type="OrthoDB" id="9803740at2"/>
<dbReference type="Proteomes" id="UP000001190">
    <property type="component" value="Chromosome"/>
</dbReference>
<dbReference type="GO" id="GO:0015934">
    <property type="term" value="C:large ribosomal subunit"/>
    <property type="evidence" value="ECO:0007669"/>
    <property type="project" value="InterPro"/>
</dbReference>
<dbReference type="GO" id="GO:0019843">
    <property type="term" value="F:rRNA binding"/>
    <property type="evidence" value="ECO:0007669"/>
    <property type="project" value="UniProtKB-UniRule"/>
</dbReference>
<dbReference type="GO" id="GO:0003735">
    <property type="term" value="F:structural constituent of ribosome"/>
    <property type="evidence" value="ECO:0007669"/>
    <property type="project" value="InterPro"/>
</dbReference>
<dbReference type="GO" id="GO:0000049">
    <property type="term" value="F:tRNA binding"/>
    <property type="evidence" value="ECO:0007669"/>
    <property type="project" value="UniProtKB-KW"/>
</dbReference>
<dbReference type="GO" id="GO:0006417">
    <property type="term" value="P:regulation of translation"/>
    <property type="evidence" value="ECO:0007669"/>
    <property type="project" value="UniProtKB-KW"/>
</dbReference>
<dbReference type="GO" id="GO:0006412">
    <property type="term" value="P:translation"/>
    <property type="evidence" value="ECO:0007669"/>
    <property type="project" value="UniProtKB-UniRule"/>
</dbReference>
<dbReference type="CDD" id="cd00403">
    <property type="entry name" value="Ribosomal_L1"/>
    <property type="match status" value="1"/>
</dbReference>
<dbReference type="FunFam" id="3.40.50.790:FF:000001">
    <property type="entry name" value="50S ribosomal protein L1"/>
    <property type="match status" value="1"/>
</dbReference>
<dbReference type="Gene3D" id="3.30.190.20">
    <property type="match status" value="1"/>
</dbReference>
<dbReference type="Gene3D" id="3.40.50.790">
    <property type="match status" value="1"/>
</dbReference>
<dbReference type="HAMAP" id="MF_01318_B">
    <property type="entry name" value="Ribosomal_uL1_B"/>
    <property type="match status" value="1"/>
</dbReference>
<dbReference type="InterPro" id="IPR005878">
    <property type="entry name" value="Ribosom_uL1_bac-type"/>
</dbReference>
<dbReference type="InterPro" id="IPR002143">
    <property type="entry name" value="Ribosomal_uL1"/>
</dbReference>
<dbReference type="InterPro" id="IPR023674">
    <property type="entry name" value="Ribosomal_uL1-like"/>
</dbReference>
<dbReference type="InterPro" id="IPR028364">
    <property type="entry name" value="Ribosomal_uL1/biogenesis"/>
</dbReference>
<dbReference type="InterPro" id="IPR016095">
    <property type="entry name" value="Ribosomal_uL1_3-a/b-sand"/>
</dbReference>
<dbReference type="InterPro" id="IPR023673">
    <property type="entry name" value="Ribosomal_uL1_CS"/>
</dbReference>
<dbReference type="NCBIfam" id="TIGR01169">
    <property type="entry name" value="rplA_bact"/>
    <property type="match status" value="1"/>
</dbReference>
<dbReference type="PANTHER" id="PTHR36427">
    <property type="entry name" value="54S RIBOSOMAL PROTEIN L1, MITOCHONDRIAL"/>
    <property type="match status" value="1"/>
</dbReference>
<dbReference type="PANTHER" id="PTHR36427:SF3">
    <property type="entry name" value="LARGE RIBOSOMAL SUBUNIT PROTEIN UL1M"/>
    <property type="match status" value="1"/>
</dbReference>
<dbReference type="Pfam" id="PF00687">
    <property type="entry name" value="Ribosomal_L1"/>
    <property type="match status" value="1"/>
</dbReference>
<dbReference type="PIRSF" id="PIRSF002155">
    <property type="entry name" value="Ribosomal_L1"/>
    <property type="match status" value="1"/>
</dbReference>
<dbReference type="SUPFAM" id="SSF56808">
    <property type="entry name" value="Ribosomal protein L1"/>
    <property type="match status" value="1"/>
</dbReference>
<dbReference type="PROSITE" id="PS01199">
    <property type="entry name" value="RIBOSOMAL_L1"/>
    <property type="match status" value="1"/>
</dbReference>
<protein>
    <recommendedName>
        <fullName evidence="1">Large ribosomal subunit protein uL1</fullName>
    </recommendedName>
    <alternativeName>
        <fullName evidence="2">50S ribosomal protein L1</fullName>
    </alternativeName>
</protein>
<evidence type="ECO:0000255" key="1">
    <source>
        <dbReference type="HAMAP-Rule" id="MF_01318"/>
    </source>
</evidence>
<evidence type="ECO:0000305" key="2"/>
<proteinExistence type="inferred from homology"/>
<sequence>MSKNSKAYRAAAEKVDRSNLYTPLQAAKLAKETSSTKQDATVEVAIRLGVDPRKADQMVRGTVNLPHGTGKTARVAVFAVGEKADAAVAAGADIVGSDDLIEKIQGGFLDFDAAIATPDQMAKVGRIARVLGPRGLMPNPKTGTVTPDVAKAVADIKGGKINFRVDKQANLHFVIGKASFEENKLAENYGAAIDEVLRLKPSASKGRYLKKITVSTTTGPGIPVDPSVTRNFTEA</sequence>
<comment type="function">
    <text evidence="1">Binds directly to 23S rRNA. The L1 stalk is quite mobile in the ribosome, and is involved in E site tRNA release.</text>
</comment>
<comment type="function">
    <text evidence="1">Protein L1 is also a translational repressor protein, it controls the translation of the L11 operon by binding to its mRNA.</text>
</comment>
<comment type="subunit">
    <text evidence="1">Part of the 50S ribosomal subunit.</text>
</comment>
<comment type="similarity">
    <text evidence="1">Belongs to the universal ribosomal protein uL1 family.</text>
</comment>
<keyword id="KW-1185">Reference proteome</keyword>
<keyword id="KW-0678">Repressor</keyword>
<keyword id="KW-0687">Ribonucleoprotein</keyword>
<keyword id="KW-0689">Ribosomal protein</keyword>
<keyword id="KW-0694">RNA-binding</keyword>
<keyword id="KW-0699">rRNA-binding</keyword>
<keyword id="KW-0810">Translation regulation</keyword>
<keyword id="KW-0820">tRNA-binding</keyword>
<organism>
    <name type="scientific">Mycobacterium marinum (strain ATCC BAA-535 / M)</name>
    <dbReference type="NCBI Taxonomy" id="216594"/>
    <lineage>
        <taxon>Bacteria</taxon>
        <taxon>Bacillati</taxon>
        <taxon>Actinomycetota</taxon>
        <taxon>Actinomycetes</taxon>
        <taxon>Mycobacteriales</taxon>
        <taxon>Mycobacteriaceae</taxon>
        <taxon>Mycobacterium</taxon>
        <taxon>Mycobacterium ulcerans group</taxon>
    </lineage>
</organism>
<feature type="chain" id="PRO_1000141435" description="Large ribosomal subunit protein uL1">
    <location>
        <begin position="1"/>
        <end position="235"/>
    </location>
</feature>
<gene>
    <name evidence="1" type="primary">rplA</name>
    <name type="ordered locus">MMAR_0974</name>
</gene>
<accession>B2HSH2</accession>